<comment type="function">
    <text evidence="1">Catalyzes the reversible reduction of methenyl-H(4)MPT(+) to methylene-H(4)MPT.</text>
</comment>
<comment type="catalytic activity">
    <reaction>
        <text>5,10-methylenetetrahydromethanopterin + oxidized coenzyme F420-(gamma-L-Glu)(n) + 2 H(+) = 5,10-methenyl-5,6,7,8-tetrahydromethanopterin + reduced coenzyme F420-(gamma-L-Glu)(n)</text>
        <dbReference type="Rhea" id="RHEA:16721"/>
        <dbReference type="Rhea" id="RHEA-COMP:12939"/>
        <dbReference type="Rhea" id="RHEA-COMP:14378"/>
        <dbReference type="ChEBI" id="CHEBI:15378"/>
        <dbReference type="ChEBI" id="CHEBI:57818"/>
        <dbReference type="ChEBI" id="CHEBI:58337"/>
        <dbReference type="ChEBI" id="CHEBI:133980"/>
        <dbReference type="ChEBI" id="CHEBI:139511"/>
        <dbReference type="EC" id="1.5.98.1"/>
    </reaction>
</comment>
<comment type="pathway">
    <text>One-carbon metabolism; methanogenesis from CO(2); 5,10-methylene-5,6,7,8-tetrahydromethanopterin from 5,10-methenyl-5,6,7,8-tetrahydromethanopterin (coenzyme F420 route): step 1/1.</text>
</comment>
<comment type="similarity">
    <text evidence="3">Belongs to the MTD family.</text>
</comment>
<name>MTD_METJA</name>
<proteinExistence type="inferred from homology"/>
<feature type="chain" id="PRO_0000075038" description="F420-dependent methylenetetrahydromethanopterin dehydrogenase">
    <location>
        <begin position="1"/>
        <end position="277"/>
    </location>
</feature>
<feature type="region of interest" description="Disordered" evidence="2">
    <location>
        <begin position="252"/>
        <end position="277"/>
    </location>
</feature>
<reference key="1">
    <citation type="journal article" date="1996" name="Science">
        <title>Complete genome sequence of the methanogenic archaeon, Methanococcus jannaschii.</title>
        <authorList>
            <person name="Bult C.J."/>
            <person name="White O."/>
            <person name="Olsen G.J."/>
            <person name="Zhou L."/>
            <person name="Fleischmann R.D."/>
            <person name="Sutton G.G."/>
            <person name="Blake J.A."/>
            <person name="FitzGerald L.M."/>
            <person name="Clayton R.A."/>
            <person name="Gocayne J.D."/>
            <person name="Kerlavage A.R."/>
            <person name="Dougherty B.A."/>
            <person name="Tomb J.-F."/>
            <person name="Adams M.D."/>
            <person name="Reich C.I."/>
            <person name="Overbeek R."/>
            <person name="Kirkness E.F."/>
            <person name="Weinstock K.G."/>
            <person name="Merrick J.M."/>
            <person name="Glodek A."/>
            <person name="Scott J.L."/>
            <person name="Geoghagen N.S.M."/>
            <person name="Weidman J.F."/>
            <person name="Fuhrmann J.L."/>
            <person name="Nguyen D."/>
            <person name="Utterback T.R."/>
            <person name="Kelley J.M."/>
            <person name="Peterson J.D."/>
            <person name="Sadow P.W."/>
            <person name="Hanna M.C."/>
            <person name="Cotton M.D."/>
            <person name="Roberts K.M."/>
            <person name="Hurst M.A."/>
            <person name="Kaine B.P."/>
            <person name="Borodovsky M."/>
            <person name="Klenk H.-P."/>
            <person name="Fraser C.M."/>
            <person name="Smith H.O."/>
            <person name="Woese C.R."/>
            <person name="Venter J.C."/>
        </authorList>
    </citation>
    <scope>NUCLEOTIDE SEQUENCE [LARGE SCALE GENOMIC DNA]</scope>
    <source>
        <strain>ATCC 43067 / DSM 2661 / JAL-1 / JCM 10045 / NBRC 100440</strain>
    </source>
</reference>
<dbReference type="EC" id="1.5.98.1"/>
<dbReference type="EMBL" id="L77117">
    <property type="protein sequence ID" value="AAB99039.1"/>
    <property type="molecule type" value="Genomic_DNA"/>
</dbReference>
<dbReference type="PIR" id="B64429">
    <property type="entry name" value="B64429"/>
</dbReference>
<dbReference type="RefSeq" id="WP_010870548.1">
    <property type="nucleotide sequence ID" value="NC_000909.1"/>
</dbReference>
<dbReference type="SMR" id="Q58441"/>
<dbReference type="FunCoup" id="Q58441">
    <property type="interactions" value="92"/>
</dbReference>
<dbReference type="STRING" id="243232.MJ_1035"/>
<dbReference type="PaxDb" id="243232-MJ_1035"/>
<dbReference type="EnsemblBacteria" id="AAB99039">
    <property type="protein sequence ID" value="AAB99039"/>
    <property type="gene ID" value="MJ_1035"/>
</dbReference>
<dbReference type="GeneID" id="1451932"/>
<dbReference type="KEGG" id="mja:MJ_1035"/>
<dbReference type="eggNOG" id="arCOG04382">
    <property type="taxonomic scope" value="Archaea"/>
</dbReference>
<dbReference type="HOGENOM" id="CLU_1006890_0_0_2"/>
<dbReference type="InParanoid" id="Q58441"/>
<dbReference type="OrthoDB" id="49844at2157"/>
<dbReference type="PhylomeDB" id="Q58441"/>
<dbReference type="UniPathway" id="UPA00640">
    <property type="reaction ID" value="UER00695"/>
</dbReference>
<dbReference type="Proteomes" id="UP000000805">
    <property type="component" value="Chromosome"/>
</dbReference>
<dbReference type="GO" id="GO:0008901">
    <property type="term" value="F:ferredoxin hydrogenase activity"/>
    <property type="evidence" value="ECO:0007669"/>
    <property type="project" value="InterPro"/>
</dbReference>
<dbReference type="GO" id="GO:0030268">
    <property type="term" value="F:methylenetetrahydromethanopterin dehydrogenase activity"/>
    <property type="evidence" value="ECO:0007669"/>
    <property type="project" value="UniProtKB-UniRule"/>
</dbReference>
<dbReference type="GO" id="GO:0019386">
    <property type="term" value="P:methanogenesis, from carbon dioxide"/>
    <property type="evidence" value="ECO:0007669"/>
    <property type="project" value="UniProtKB-UniRule"/>
</dbReference>
<dbReference type="GO" id="GO:0006730">
    <property type="term" value="P:one-carbon metabolic process"/>
    <property type="evidence" value="ECO:0007669"/>
    <property type="project" value="UniProtKB-UniRule"/>
</dbReference>
<dbReference type="Gene3D" id="6.10.140.120">
    <property type="match status" value="1"/>
</dbReference>
<dbReference type="Gene3D" id="3.40.50.10830">
    <property type="entry name" value="F420-dependent methylenetetrahydromethanopterin dehydrogenase (MTD)"/>
    <property type="match status" value="1"/>
</dbReference>
<dbReference type="HAMAP" id="MF_00058">
    <property type="entry name" value="MTD"/>
    <property type="match status" value="1"/>
</dbReference>
<dbReference type="InterPro" id="IPR002844">
    <property type="entry name" value="MTD"/>
</dbReference>
<dbReference type="InterPro" id="IPR036080">
    <property type="entry name" value="MTD_sf"/>
</dbReference>
<dbReference type="NCBIfam" id="NF002162">
    <property type="entry name" value="PRK00994.1"/>
    <property type="match status" value="1"/>
</dbReference>
<dbReference type="Pfam" id="PF01993">
    <property type="entry name" value="MTD"/>
    <property type="match status" value="1"/>
</dbReference>
<dbReference type="PIRSF" id="PIRSF005627">
    <property type="entry name" value="MTD"/>
    <property type="match status" value="1"/>
</dbReference>
<dbReference type="SUPFAM" id="SSF102324">
    <property type="entry name" value="F420-dependent methylenetetrahydromethanopterin dehydrogenase (MTD)"/>
    <property type="match status" value="1"/>
</dbReference>
<sequence>MVVKIGIIKCGNIGMSPVVDLALDERADRKDIAVRVLGSGAKMDPESVEEVTKKMVEEVKPDFIIYIGPNPAAPGPKKAREILSQSGIPAVIIGDAPGLRVKDEMEQQGLGYIIIKCDPMIGARREFLDPVEMALFNADVIRVLAGTGALRIVQEAIDKMIDAVKEGKEIELPKIVITEQKAVEAMEFTNPYAKAKAMAAFTIAEKVGDVDVKGCFMTKEAEKYIPIVASAHEMIRYAAKLVDEARELEKAMDAVSRKPHHPEGKRLSKKALMEKPE</sequence>
<accession>Q58441</accession>
<organism>
    <name type="scientific">Methanocaldococcus jannaschii (strain ATCC 43067 / DSM 2661 / JAL-1 / JCM 10045 / NBRC 100440)</name>
    <name type="common">Methanococcus jannaschii</name>
    <dbReference type="NCBI Taxonomy" id="243232"/>
    <lineage>
        <taxon>Archaea</taxon>
        <taxon>Methanobacteriati</taxon>
        <taxon>Methanobacteriota</taxon>
        <taxon>Methanomada group</taxon>
        <taxon>Methanococci</taxon>
        <taxon>Methanococcales</taxon>
        <taxon>Methanocaldococcaceae</taxon>
        <taxon>Methanocaldococcus</taxon>
    </lineage>
</organism>
<gene>
    <name type="primary">mtd</name>
    <name type="ordered locus">MJ1035</name>
</gene>
<protein>
    <recommendedName>
        <fullName>F420-dependent methylenetetrahydromethanopterin dehydrogenase</fullName>
        <shortName>MTD</shortName>
        <ecNumber>1.5.98.1</ecNumber>
    </recommendedName>
    <alternativeName>
        <fullName>Coenzyme F420-dependent N5,N10-methylenetetrahydromethanopterin dehydrogenase</fullName>
    </alternativeName>
</protein>
<keyword id="KW-0484">Methanogenesis</keyword>
<keyword id="KW-0554">One-carbon metabolism</keyword>
<keyword id="KW-0560">Oxidoreductase</keyword>
<keyword id="KW-1185">Reference proteome</keyword>
<evidence type="ECO:0000250" key="1"/>
<evidence type="ECO:0000256" key="2">
    <source>
        <dbReference type="SAM" id="MobiDB-lite"/>
    </source>
</evidence>
<evidence type="ECO:0000305" key="3"/>